<feature type="chain" id="PRO_0000048069" description="DNA-directed RNA polymerase 132 kDa polypeptide">
    <location>
        <begin position="1"/>
        <end position="1164"/>
    </location>
</feature>
<gene>
    <name type="primary">RPO132</name>
    <name type="ordered locus">RPXV133</name>
</gene>
<protein>
    <recommendedName>
        <fullName>DNA-directed RNA polymerase 132 kDa polypeptide</fullName>
        <ecNumber>2.7.7.6</ecNumber>
    </recommendedName>
</protein>
<name>RP132_RABPU</name>
<keyword id="KW-0240">DNA-directed RNA polymerase</keyword>
<keyword id="KW-0479">Metal-binding</keyword>
<keyword id="KW-0548">Nucleotidyltransferase</keyword>
<keyword id="KW-0804">Transcription</keyword>
<keyword id="KW-0808">Transferase</keyword>
<keyword id="KW-0946">Virion</keyword>
<proteinExistence type="inferred from homology"/>
<organismHost>
    <name type="scientific">Oryctolagus cuniculus</name>
    <name type="common">Rabbit</name>
    <dbReference type="NCBI Taxonomy" id="9986"/>
</organismHost>
<reference key="1">
    <citation type="journal article" date="2005" name="J. Gen. Virol.">
        <title>Complete coding sequences of the rabbitpox virus genome.</title>
        <authorList>
            <person name="Li G."/>
            <person name="Chen N."/>
            <person name="Roper R.L."/>
            <person name="Feng Z."/>
            <person name="Hunter A.L."/>
            <person name="Danila M."/>
            <person name="Lefkowitz E.J."/>
            <person name="Buller R.M.L."/>
            <person name="Upton C."/>
        </authorList>
    </citation>
    <scope>NUCLEOTIDE SEQUENCE [LARGE SCALE GENOMIC DNA]</scope>
</reference>
<sequence>MKKNTDSEMDQRLGYKFLVPDPKAGVFYRPLHFQYVSYSNFILHRLHEILTVKRPLLSFKNNTERIMIEISNVKVTPPDYSPIIASIKGKSYDALATFTVNIFKEVMTKEGISITKISSYEGKDSHLIKIPLLIGYGNKNPLDTAKYLVPNVIGGVFINKQSVEKVGINLVEKITTWPKFRVVKPNSFTFSFSSVSPPNVLPTRYRHYKISLDISQLEASNISSTKTFITVNIVLLSQYLSRVSLEFIRRSLSYDMPPEVVYLVNAIIDSAKRITESITDFNIDTYINDLVEAEHIKQKSQLTINEFKYEMLHNFLPHMNYTPDQLKGFYMISLLRKFLYCIYHTSRYPDRDSMVCHRILTYGKYFETLAHDELENYIGNIRNDIMNNHKNRGTYAVNIHVLTTPGLNHAFSSLLSGKFKKSDGSYRTHPHYSWMQNISIPRSVGFYPDQVKISKMFSVRKYHPSQYLYFCSSDVPERGPQVGLVSQLSVLSSITNILTSEYLDLEKKICEYIRSYYKDDISYFETGFPITIENALVASLNPNMICDFVTDFRRRKRMGFFGNLEVGITLVRDHMNEIRINIGAGRLVRPFLVVDNGELMMDVCPELESRLDDMTFSDIQKEFPHVIEMVDIEQFTFSNVCESVQKFRMMSKDERKQYDLCDFPAEFRDGYVASSLVGINHNSGPRAILGCAQAKQAISCLSSDIRNKIDNGIHLMYPERPIVISKALETSKIAANCFGQHVTIALMSYKGINQEDGIIIKKQFIQRGGLDIVTAKKHQVEIPLENFNNKERDRSNAYSKLESNGLVRLNAFLESGDAIARNISSRTLEDDFARDNQISFDVSEKYTDMYKSRVERVQVELTDKVKVRVLTMKERRPILGDKFTTRTSQKGTVAYIADETELPYDENGITPDVIINSTSIFSRKTISMLIEVILTAAYSAKPYNNKGENRPVCFPSSNETSIDTYMQFAKQCYEHSNPKLSDEELSDKIFCEKILYDPETDKPYASKVFFGPIYYLRLRHLTQDKATVRCRGKKTKLIRQANEGRKRGGGIKFGEMERDCLIAHGAANTITEVLKDSEEDYQDVYVCENCGDIAAQIKGINTCLRCSKLNLSPLLTKIDTTHVSKVFLTQMNARGVKVKLDFERRPPSFYKPLDKVDLKPSFLV</sequence>
<accession>Q6RZF8</accession>
<comment type="function">
    <text evidence="1">Part of the DNA-dependent RNA polymerase which catalyzes the transcription of viral DNA into RNA using the four ribonucleoside triphosphates as substrates. Responsible for the transcription of early, intermediate and late genes. DNA-dependent RNA polymerase associates with the early transcription factor (ETF), itself composed of D6 and A7, thereby allowing the early genes transcription. Late transcription, and probably also intermediate transcription, require newly synthesized RNA polymerase (By similarity).</text>
</comment>
<comment type="catalytic activity">
    <reaction>
        <text>RNA(n) + a ribonucleoside 5'-triphosphate = RNA(n+1) + diphosphate</text>
        <dbReference type="Rhea" id="RHEA:21248"/>
        <dbReference type="Rhea" id="RHEA-COMP:14527"/>
        <dbReference type="Rhea" id="RHEA-COMP:17342"/>
        <dbReference type="ChEBI" id="CHEBI:33019"/>
        <dbReference type="ChEBI" id="CHEBI:61557"/>
        <dbReference type="ChEBI" id="CHEBI:140395"/>
        <dbReference type="EC" id="2.7.7.6"/>
    </reaction>
</comment>
<comment type="subunit">
    <text evidence="1">The DNA-dependent RNA polymerase used for intermediate and late genes expression consists of eight subunits (147) kDa, (133) kDa, (35) kDa, (30) kDa, (22) kDa, (19) kDa, (18) kDa and (7) kDa totalling more than 500 kDa in mass. The same holoenzyme, with the addition of the transcription-specificity factor RAP94, is used for early gene expression (By similarity).</text>
</comment>
<comment type="subcellular location">
    <subcellularLocation>
        <location evidence="1">Virion</location>
    </subcellularLocation>
    <text evidence="1">All the enzymes and other proteins required to synthesize early mRNAs are packaged within the virion core along with the DNA genome. This is necessary because viral early mRNAs are synthesized within minutes after virus entry into the cell and are extruded through pores in the core particle (By similarity).</text>
</comment>
<comment type="similarity">
    <text evidence="2">Belongs to the RNA polymerase beta chain family.</text>
</comment>
<organism>
    <name type="scientific">Rabbitpox virus (strain Utrecht)</name>
    <name type="common">RPV</name>
    <dbReference type="NCBI Taxonomy" id="45417"/>
    <lineage>
        <taxon>Viruses</taxon>
        <taxon>Varidnaviria</taxon>
        <taxon>Bamfordvirae</taxon>
        <taxon>Nucleocytoviricota</taxon>
        <taxon>Pokkesviricetes</taxon>
        <taxon>Chitovirales</taxon>
        <taxon>Poxviridae</taxon>
        <taxon>Chordopoxvirinae</taxon>
        <taxon>Orthopoxvirus</taxon>
        <taxon>Vaccinia virus</taxon>
    </lineage>
</organism>
<evidence type="ECO:0000250" key="1"/>
<evidence type="ECO:0000305" key="2"/>
<dbReference type="EC" id="2.7.7.6"/>
<dbReference type="EMBL" id="AY484669">
    <property type="protein sequence ID" value="AAS49846.1"/>
    <property type="molecule type" value="Genomic_DNA"/>
</dbReference>
<dbReference type="SMR" id="Q6RZF8"/>
<dbReference type="Proteomes" id="UP000166173">
    <property type="component" value="Segment"/>
</dbReference>
<dbReference type="GO" id="GO:0000428">
    <property type="term" value="C:DNA-directed RNA polymerase complex"/>
    <property type="evidence" value="ECO:0007669"/>
    <property type="project" value="UniProtKB-KW"/>
</dbReference>
<dbReference type="GO" id="GO:0044423">
    <property type="term" value="C:virion component"/>
    <property type="evidence" value="ECO:0007669"/>
    <property type="project" value="UniProtKB-KW"/>
</dbReference>
<dbReference type="GO" id="GO:0003677">
    <property type="term" value="F:DNA binding"/>
    <property type="evidence" value="ECO:0007669"/>
    <property type="project" value="InterPro"/>
</dbReference>
<dbReference type="GO" id="GO:0003899">
    <property type="term" value="F:DNA-directed RNA polymerase activity"/>
    <property type="evidence" value="ECO:0007669"/>
    <property type="project" value="UniProtKB-EC"/>
</dbReference>
<dbReference type="GO" id="GO:0046872">
    <property type="term" value="F:metal ion binding"/>
    <property type="evidence" value="ECO:0007669"/>
    <property type="project" value="UniProtKB-KW"/>
</dbReference>
<dbReference type="GO" id="GO:0032549">
    <property type="term" value="F:ribonucleoside binding"/>
    <property type="evidence" value="ECO:0007669"/>
    <property type="project" value="InterPro"/>
</dbReference>
<dbReference type="GO" id="GO:0006351">
    <property type="term" value="P:DNA-templated transcription"/>
    <property type="evidence" value="ECO:0007669"/>
    <property type="project" value="InterPro"/>
</dbReference>
<dbReference type="Gene3D" id="2.40.50.150">
    <property type="match status" value="1"/>
</dbReference>
<dbReference type="Gene3D" id="3.90.1100.10">
    <property type="match status" value="2"/>
</dbReference>
<dbReference type="Gene3D" id="2.40.270.10">
    <property type="entry name" value="DNA-directed RNA polymerase, subunit 2, domain 6"/>
    <property type="match status" value="1"/>
</dbReference>
<dbReference type="Gene3D" id="3.90.1800.10">
    <property type="entry name" value="RNA polymerase alpha subunit dimerisation domain"/>
    <property type="match status" value="1"/>
</dbReference>
<dbReference type="InterPro" id="IPR015712">
    <property type="entry name" value="DNA-dir_RNA_pol_su2"/>
</dbReference>
<dbReference type="InterPro" id="IPR007120">
    <property type="entry name" value="DNA-dir_RNAP_su2_dom"/>
</dbReference>
<dbReference type="InterPro" id="IPR037033">
    <property type="entry name" value="DNA-dir_RNAP_su2_hyb_sf"/>
</dbReference>
<dbReference type="InterPro" id="IPR024390">
    <property type="entry name" value="RNA_pol_132_poxvirus"/>
</dbReference>
<dbReference type="InterPro" id="IPR007121">
    <property type="entry name" value="RNA_pol_bsu_CS"/>
</dbReference>
<dbReference type="InterPro" id="IPR007645">
    <property type="entry name" value="RNA_pol_Rpb2_3"/>
</dbReference>
<dbReference type="InterPro" id="IPR007647">
    <property type="entry name" value="RNA_pol_Rpb2_5"/>
</dbReference>
<dbReference type="InterPro" id="IPR007641">
    <property type="entry name" value="RNA_pol_Rpb2_7"/>
</dbReference>
<dbReference type="InterPro" id="IPR014724">
    <property type="entry name" value="RNA_pol_RPB2_OB-fold"/>
</dbReference>
<dbReference type="PANTHER" id="PTHR20856">
    <property type="entry name" value="DNA-DIRECTED RNA POLYMERASE I SUBUNIT 2"/>
    <property type="match status" value="1"/>
</dbReference>
<dbReference type="Pfam" id="PF04565">
    <property type="entry name" value="RNA_pol_Rpb2_3"/>
    <property type="match status" value="1"/>
</dbReference>
<dbReference type="Pfam" id="PF04567">
    <property type="entry name" value="RNA_pol_Rpb2_5"/>
    <property type="match status" value="1"/>
</dbReference>
<dbReference type="Pfam" id="PF00562">
    <property type="entry name" value="RNA_pol_Rpb2_6"/>
    <property type="match status" value="1"/>
</dbReference>
<dbReference type="Pfam" id="PF04560">
    <property type="entry name" value="RNA_pol_Rpb2_7"/>
    <property type="match status" value="1"/>
</dbReference>
<dbReference type="Pfam" id="PF12415">
    <property type="entry name" value="rpo132"/>
    <property type="match status" value="1"/>
</dbReference>
<dbReference type="SUPFAM" id="SSF64484">
    <property type="entry name" value="beta and beta-prime subunits of DNA dependent RNA-polymerase"/>
    <property type="match status" value="1"/>
</dbReference>
<dbReference type="PROSITE" id="PS01166">
    <property type="entry name" value="RNA_POL_BETA"/>
    <property type="match status" value="1"/>
</dbReference>